<proteinExistence type="inferred from homology"/>
<dbReference type="EC" id="6.1.1.17" evidence="1"/>
<dbReference type="EMBL" id="CP000830">
    <property type="protein sequence ID" value="ABV94481.1"/>
    <property type="molecule type" value="Genomic_DNA"/>
</dbReference>
<dbReference type="RefSeq" id="WP_012179409.1">
    <property type="nucleotide sequence ID" value="NC_009952.1"/>
</dbReference>
<dbReference type="SMR" id="A8LIP0"/>
<dbReference type="STRING" id="398580.Dshi_2748"/>
<dbReference type="KEGG" id="dsh:Dshi_2748"/>
<dbReference type="eggNOG" id="COG0008">
    <property type="taxonomic scope" value="Bacteria"/>
</dbReference>
<dbReference type="HOGENOM" id="CLU_015768_6_1_5"/>
<dbReference type="OrthoDB" id="9807503at2"/>
<dbReference type="Proteomes" id="UP000006833">
    <property type="component" value="Chromosome"/>
</dbReference>
<dbReference type="GO" id="GO:0005737">
    <property type="term" value="C:cytoplasm"/>
    <property type="evidence" value="ECO:0007669"/>
    <property type="project" value="UniProtKB-SubCell"/>
</dbReference>
<dbReference type="GO" id="GO:0005524">
    <property type="term" value="F:ATP binding"/>
    <property type="evidence" value="ECO:0007669"/>
    <property type="project" value="UniProtKB-UniRule"/>
</dbReference>
<dbReference type="GO" id="GO:0004818">
    <property type="term" value="F:glutamate-tRNA ligase activity"/>
    <property type="evidence" value="ECO:0007669"/>
    <property type="project" value="UniProtKB-UniRule"/>
</dbReference>
<dbReference type="GO" id="GO:0000049">
    <property type="term" value="F:tRNA binding"/>
    <property type="evidence" value="ECO:0007669"/>
    <property type="project" value="InterPro"/>
</dbReference>
<dbReference type="GO" id="GO:0006424">
    <property type="term" value="P:glutamyl-tRNA aminoacylation"/>
    <property type="evidence" value="ECO:0007669"/>
    <property type="project" value="UniProtKB-UniRule"/>
</dbReference>
<dbReference type="Gene3D" id="1.10.10.350">
    <property type="match status" value="1"/>
</dbReference>
<dbReference type="Gene3D" id="3.40.50.620">
    <property type="entry name" value="HUPs"/>
    <property type="match status" value="1"/>
</dbReference>
<dbReference type="HAMAP" id="MF_00022">
    <property type="entry name" value="Glu_tRNA_synth_type1"/>
    <property type="match status" value="1"/>
</dbReference>
<dbReference type="InterPro" id="IPR045462">
    <property type="entry name" value="aa-tRNA-synth_I_cd-bd"/>
</dbReference>
<dbReference type="InterPro" id="IPR020751">
    <property type="entry name" value="aa-tRNA-synth_I_codon-bd_sub2"/>
</dbReference>
<dbReference type="InterPro" id="IPR001412">
    <property type="entry name" value="aa-tRNA-synth_I_CS"/>
</dbReference>
<dbReference type="InterPro" id="IPR008925">
    <property type="entry name" value="aa_tRNA-synth_I_cd-bd_sf"/>
</dbReference>
<dbReference type="InterPro" id="IPR004527">
    <property type="entry name" value="Glu-tRNA-ligase_bac/mito"/>
</dbReference>
<dbReference type="InterPro" id="IPR000924">
    <property type="entry name" value="Glu/Gln-tRNA-synth"/>
</dbReference>
<dbReference type="InterPro" id="IPR020058">
    <property type="entry name" value="Glu/Gln-tRNA-synth_Ib_cat-dom"/>
</dbReference>
<dbReference type="InterPro" id="IPR049940">
    <property type="entry name" value="GluQ/Sye"/>
</dbReference>
<dbReference type="InterPro" id="IPR014729">
    <property type="entry name" value="Rossmann-like_a/b/a_fold"/>
</dbReference>
<dbReference type="NCBIfam" id="TIGR00464">
    <property type="entry name" value="gltX_bact"/>
    <property type="match status" value="1"/>
</dbReference>
<dbReference type="PANTHER" id="PTHR43311">
    <property type="entry name" value="GLUTAMATE--TRNA LIGASE"/>
    <property type="match status" value="1"/>
</dbReference>
<dbReference type="PANTHER" id="PTHR43311:SF2">
    <property type="entry name" value="GLUTAMATE--TRNA LIGASE, MITOCHONDRIAL-RELATED"/>
    <property type="match status" value="1"/>
</dbReference>
<dbReference type="Pfam" id="PF19269">
    <property type="entry name" value="Anticodon_2"/>
    <property type="match status" value="1"/>
</dbReference>
<dbReference type="Pfam" id="PF00749">
    <property type="entry name" value="tRNA-synt_1c"/>
    <property type="match status" value="1"/>
</dbReference>
<dbReference type="PRINTS" id="PR00987">
    <property type="entry name" value="TRNASYNTHGLU"/>
</dbReference>
<dbReference type="SUPFAM" id="SSF48163">
    <property type="entry name" value="An anticodon-binding domain of class I aminoacyl-tRNA synthetases"/>
    <property type="match status" value="1"/>
</dbReference>
<dbReference type="SUPFAM" id="SSF52374">
    <property type="entry name" value="Nucleotidylyl transferase"/>
    <property type="match status" value="1"/>
</dbReference>
<dbReference type="PROSITE" id="PS00178">
    <property type="entry name" value="AA_TRNA_LIGASE_I"/>
    <property type="match status" value="1"/>
</dbReference>
<name>SYE2_DINSH</name>
<sequence>MTTTRFAPSPTGYLHVGNLRTALFNYMIARKAGGTFILRIDDTDPERSKPEYVDAIQEDLTWLGLTWDRIEYQSRRLDRYAEAADALRAAGRFYEAFETPTELDLKRKKQLNMGRPPVYDRAALALSEDEKAALRAERGQGVWRFKLDHERITWTDGILGDISIDAASVSDPVLIRGDGQVLYTIASVVDDTEMGVTHVVRGSDHVTNTATQIQIMAALGHGHPEFAHHSLLTGPQGEALSKRLGTLALRDLRAEGIEPMALLSLMARLGSSQPVEVAGSLEALIEGFDLSTFGAAPTKFDRADLFPLTARLLHATPFAEVADEIAALGVPAAQAELFWEVARANITTRADLAGWWQLFRDGGAPLVAEEDRAFVADAFARLPEPPYGPETWGAWTAEVKAASGRKGKGLFMPLRKAVTGLERGPEMADVMRLLQKKPTL</sequence>
<accession>A8LIP0</accession>
<gene>
    <name evidence="1" type="primary">gltX2</name>
    <name type="ordered locus">Dshi_2748</name>
</gene>
<keyword id="KW-0030">Aminoacyl-tRNA synthetase</keyword>
<keyword id="KW-0067">ATP-binding</keyword>
<keyword id="KW-0963">Cytoplasm</keyword>
<keyword id="KW-0436">Ligase</keyword>
<keyword id="KW-0547">Nucleotide-binding</keyword>
<keyword id="KW-0648">Protein biosynthesis</keyword>
<keyword id="KW-1185">Reference proteome</keyword>
<organism>
    <name type="scientific">Dinoroseobacter shibae (strain DSM 16493 / NCIMB 14021 / DFL 12)</name>
    <dbReference type="NCBI Taxonomy" id="398580"/>
    <lineage>
        <taxon>Bacteria</taxon>
        <taxon>Pseudomonadati</taxon>
        <taxon>Pseudomonadota</taxon>
        <taxon>Alphaproteobacteria</taxon>
        <taxon>Rhodobacterales</taxon>
        <taxon>Roseobacteraceae</taxon>
        <taxon>Dinoroseobacter</taxon>
    </lineage>
</organism>
<protein>
    <recommendedName>
        <fullName evidence="1">Glutamate--tRNA ligase 2</fullName>
        <ecNumber evidence="1">6.1.1.17</ecNumber>
    </recommendedName>
    <alternativeName>
        <fullName evidence="1">Glutamyl-tRNA synthetase 2</fullName>
        <shortName evidence="1">GluRS 2</shortName>
    </alternativeName>
</protein>
<comment type="function">
    <text evidence="1">Catalyzes the attachment of glutamate to tRNA(Glu) in a two-step reaction: glutamate is first activated by ATP to form Glu-AMP and then transferred to the acceptor end of tRNA(Glu).</text>
</comment>
<comment type="catalytic activity">
    <reaction evidence="1">
        <text>tRNA(Glu) + L-glutamate + ATP = L-glutamyl-tRNA(Glu) + AMP + diphosphate</text>
        <dbReference type="Rhea" id="RHEA:23540"/>
        <dbReference type="Rhea" id="RHEA-COMP:9663"/>
        <dbReference type="Rhea" id="RHEA-COMP:9680"/>
        <dbReference type="ChEBI" id="CHEBI:29985"/>
        <dbReference type="ChEBI" id="CHEBI:30616"/>
        <dbReference type="ChEBI" id="CHEBI:33019"/>
        <dbReference type="ChEBI" id="CHEBI:78442"/>
        <dbReference type="ChEBI" id="CHEBI:78520"/>
        <dbReference type="ChEBI" id="CHEBI:456215"/>
        <dbReference type="EC" id="6.1.1.17"/>
    </reaction>
</comment>
<comment type="subunit">
    <text evidence="1">Monomer.</text>
</comment>
<comment type="subcellular location">
    <subcellularLocation>
        <location evidence="1">Cytoplasm</location>
    </subcellularLocation>
</comment>
<comment type="similarity">
    <text evidence="1">Belongs to the class-I aminoacyl-tRNA synthetase family. Glutamate--tRNA ligase type 1 subfamily.</text>
</comment>
<reference key="1">
    <citation type="journal article" date="2010" name="ISME J.">
        <title>The complete genome sequence of the algal symbiont Dinoroseobacter shibae: a hitchhiker's guide to life in the sea.</title>
        <authorList>
            <person name="Wagner-Dobler I."/>
            <person name="Ballhausen B."/>
            <person name="Berger M."/>
            <person name="Brinkhoff T."/>
            <person name="Buchholz I."/>
            <person name="Bunk B."/>
            <person name="Cypionka H."/>
            <person name="Daniel R."/>
            <person name="Drepper T."/>
            <person name="Gerdts G."/>
            <person name="Hahnke S."/>
            <person name="Han C."/>
            <person name="Jahn D."/>
            <person name="Kalhoefer D."/>
            <person name="Kiss H."/>
            <person name="Klenk H.P."/>
            <person name="Kyrpides N."/>
            <person name="Liebl W."/>
            <person name="Liesegang H."/>
            <person name="Meincke L."/>
            <person name="Pati A."/>
            <person name="Petersen J."/>
            <person name="Piekarski T."/>
            <person name="Pommerenke C."/>
            <person name="Pradella S."/>
            <person name="Pukall R."/>
            <person name="Rabus R."/>
            <person name="Stackebrandt E."/>
            <person name="Thole S."/>
            <person name="Thompson L."/>
            <person name="Tielen P."/>
            <person name="Tomasch J."/>
            <person name="von Jan M."/>
            <person name="Wanphrut N."/>
            <person name="Wichels A."/>
            <person name="Zech H."/>
            <person name="Simon M."/>
        </authorList>
    </citation>
    <scope>NUCLEOTIDE SEQUENCE [LARGE SCALE GENOMIC DNA]</scope>
    <source>
        <strain>DSM 16493 / NCIMB 14021 / DFL 12</strain>
    </source>
</reference>
<feature type="chain" id="PRO_0000367666" description="Glutamate--tRNA ligase 2">
    <location>
        <begin position="1"/>
        <end position="440"/>
    </location>
</feature>
<feature type="short sequence motif" description="'HIGH' region" evidence="1">
    <location>
        <begin position="8"/>
        <end position="18"/>
    </location>
</feature>
<feature type="short sequence motif" description="'KMSKS' region" evidence="1">
    <location>
        <begin position="239"/>
        <end position="243"/>
    </location>
</feature>
<feature type="binding site" evidence="1">
    <location>
        <position position="242"/>
    </location>
    <ligand>
        <name>ATP</name>
        <dbReference type="ChEBI" id="CHEBI:30616"/>
    </ligand>
</feature>
<evidence type="ECO:0000255" key="1">
    <source>
        <dbReference type="HAMAP-Rule" id="MF_00022"/>
    </source>
</evidence>